<reference key="1">
    <citation type="journal article" date="2005" name="Genome Res.">
        <title>Complete genome sequence of the hyperthermophilic archaeon Thermococcus kodakaraensis KOD1 and comparison with Pyrococcus genomes.</title>
        <authorList>
            <person name="Fukui T."/>
            <person name="Atomi H."/>
            <person name="Kanai T."/>
            <person name="Matsumi R."/>
            <person name="Fujiwara S."/>
            <person name="Imanaka T."/>
        </authorList>
    </citation>
    <scope>NUCLEOTIDE SEQUENCE [LARGE SCALE GENOMIC DNA]</scope>
    <source>
        <strain>ATCC BAA-918 / JCM 12380 / KOD1</strain>
    </source>
</reference>
<protein>
    <recommendedName>
        <fullName evidence="1">Proteasome subunit beta 2</fullName>
        <ecNumber evidence="1">3.4.25.1</ecNumber>
    </recommendedName>
    <alternativeName>
        <fullName evidence="1">20S proteasome beta subunit 2</fullName>
    </alternativeName>
    <alternativeName>
        <fullName evidence="1">Proteasome core protein PsmB 2</fullName>
    </alternativeName>
</protein>
<sequence>MEKKTGTTTVGIRTKEGVVLAADTQASLDHMVETLNIRKILPITDRIAITTAGSVGDVQALARMLEAEARYYQFTWGRPMTAKAMAHLLSNILNENKWFPYMVQIIIGGYVEEPTLANLDPLGGLIFDDYTATGSGSPFAIAVLEDGFRKDMSLEEAKELAVRAVRTAGKRDVYTGDRKVQVVVISKDGMKEEFVEFKE</sequence>
<proteinExistence type="inferred from homology"/>
<comment type="function">
    <text evidence="1">Component of the proteasome core, a large protease complex with broad specificity involved in protein degradation.</text>
</comment>
<comment type="catalytic activity">
    <reaction evidence="1">
        <text>Cleavage of peptide bonds with very broad specificity.</text>
        <dbReference type="EC" id="3.4.25.1"/>
    </reaction>
</comment>
<comment type="activity regulation">
    <text evidence="1">The formation of the proteasomal ATPase PAN-20S proteasome complex, via the docking of the C-termini of PAN into the intersubunit pockets in the alpha-rings, triggers opening of the gate for substrate entry. Interconversion between the open-gate and close-gate conformations leads to a dynamic regulation of the 20S proteasome proteolysis activity.</text>
</comment>
<comment type="subunit">
    <text evidence="1">The 20S proteasome core is composed of 14 alpha and 14 beta subunits that assemble into four stacked heptameric rings, resulting in a barrel-shaped structure. The two inner rings, each composed of seven catalytic beta subunits, are sandwiched by two outer rings, each composed of seven alpha subunits. The catalytic chamber with the active sites is on the inside of the barrel. Has a gated structure, the ends of the cylinder being occluded by the N-termini of the alpha-subunits. Is capped at one or both ends by the proteasome regulatory ATPase, PAN.</text>
</comment>
<comment type="subcellular location">
    <subcellularLocation>
        <location evidence="1">Cytoplasm</location>
    </subcellularLocation>
</comment>
<comment type="similarity">
    <text evidence="1">Belongs to the peptidase T1B family.</text>
</comment>
<feature type="propeptide" id="PRO_0000397416" description="Removed in mature form; by autocatalysis" evidence="1">
    <location>
        <begin position="1"/>
        <end position="6"/>
    </location>
</feature>
<feature type="chain" id="PRO_0000397417" description="Proteasome subunit beta 2">
    <location>
        <begin position="7"/>
        <end position="199"/>
    </location>
</feature>
<feature type="active site" description="Nucleophile" evidence="1">
    <location>
        <position position="7"/>
    </location>
</feature>
<accession>Q5JHL8</accession>
<gene>
    <name evidence="1" type="primary">psmB2</name>
    <name type="ordered locus">TK2207</name>
</gene>
<evidence type="ECO:0000255" key="1">
    <source>
        <dbReference type="HAMAP-Rule" id="MF_02113"/>
    </source>
</evidence>
<organism>
    <name type="scientific">Thermococcus kodakarensis (strain ATCC BAA-918 / JCM 12380 / KOD1)</name>
    <name type="common">Pyrococcus kodakaraensis (strain KOD1)</name>
    <dbReference type="NCBI Taxonomy" id="69014"/>
    <lineage>
        <taxon>Archaea</taxon>
        <taxon>Methanobacteriati</taxon>
        <taxon>Methanobacteriota</taxon>
        <taxon>Thermococci</taxon>
        <taxon>Thermococcales</taxon>
        <taxon>Thermococcaceae</taxon>
        <taxon>Thermococcus</taxon>
    </lineage>
</organism>
<dbReference type="EC" id="3.4.25.1" evidence="1"/>
<dbReference type="EMBL" id="AP006878">
    <property type="protein sequence ID" value="BAD86396.1"/>
    <property type="molecule type" value="Genomic_DNA"/>
</dbReference>
<dbReference type="RefSeq" id="WP_011251157.1">
    <property type="nucleotide sequence ID" value="NC_006624.1"/>
</dbReference>
<dbReference type="SMR" id="Q5JHL8"/>
<dbReference type="STRING" id="69014.TK2207"/>
<dbReference type="MEROPS" id="T01.002"/>
<dbReference type="EnsemblBacteria" id="BAD86396">
    <property type="protein sequence ID" value="BAD86396"/>
    <property type="gene ID" value="TK2207"/>
</dbReference>
<dbReference type="GeneID" id="78448747"/>
<dbReference type="KEGG" id="tko:TK2207"/>
<dbReference type="PATRIC" id="fig|69014.16.peg.2162"/>
<dbReference type="eggNOG" id="arCOG00970">
    <property type="taxonomic scope" value="Archaea"/>
</dbReference>
<dbReference type="HOGENOM" id="CLU_035750_7_2_2"/>
<dbReference type="InParanoid" id="Q5JHL8"/>
<dbReference type="OrthoDB" id="6330at2157"/>
<dbReference type="PhylomeDB" id="Q5JHL8"/>
<dbReference type="Proteomes" id="UP000000536">
    <property type="component" value="Chromosome"/>
</dbReference>
<dbReference type="GO" id="GO:0005829">
    <property type="term" value="C:cytosol"/>
    <property type="evidence" value="ECO:0000318"/>
    <property type="project" value="GO_Central"/>
</dbReference>
<dbReference type="GO" id="GO:0019774">
    <property type="term" value="C:proteasome core complex, beta-subunit complex"/>
    <property type="evidence" value="ECO:0000318"/>
    <property type="project" value="GO_Central"/>
</dbReference>
<dbReference type="GO" id="GO:0004175">
    <property type="term" value="F:endopeptidase activity"/>
    <property type="evidence" value="ECO:0000318"/>
    <property type="project" value="GO_Central"/>
</dbReference>
<dbReference type="GO" id="GO:0004298">
    <property type="term" value="F:threonine-type endopeptidase activity"/>
    <property type="evidence" value="ECO:0007669"/>
    <property type="project" value="UniProtKB-UniRule"/>
</dbReference>
<dbReference type="GO" id="GO:0043161">
    <property type="term" value="P:proteasome-mediated ubiquitin-dependent protein catabolic process"/>
    <property type="evidence" value="ECO:0000318"/>
    <property type="project" value="GO_Central"/>
</dbReference>
<dbReference type="CDD" id="cd03764">
    <property type="entry name" value="proteasome_beta_archeal"/>
    <property type="match status" value="1"/>
</dbReference>
<dbReference type="FunFam" id="3.60.20.10:FF:000049">
    <property type="entry name" value="Proteasome subunit beta"/>
    <property type="match status" value="1"/>
</dbReference>
<dbReference type="Gene3D" id="3.60.20.10">
    <property type="entry name" value="Glutamine Phosphoribosylpyrophosphate, subunit 1, domain 1"/>
    <property type="match status" value="1"/>
</dbReference>
<dbReference type="HAMAP" id="MF_02113_A">
    <property type="entry name" value="Proteasome_B_A"/>
    <property type="match status" value="1"/>
</dbReference>
<dbReference type="InterPro" id="IPR029055">
    <property type="entry name" value="Ntn_hydrolases_N"/>
</dbReference>
<dbReference type="InterPro" id="IPR019983">
    <property type="entry name" value="Pept_T1A_Psome_bsu_arc"/>
</dbReference>
<dbReference type="InterPro" id="IPR000243">
    <property type="entry name" value="Pept_T1A_subB"/>
</dbReference>
<dbReference type="InterPro" id="IPR001353">
    <property type="entry name" value="Proteasome_sua/b"/>
</dbReference>
<dbReference type="InterPro" id="IPR023333">
    <property type="entry name" value="Proteasome_suB-type"/>
</dbReference>
<dbReference type="NCBIfam" id="TIGR03634">
    <property type="entry name" value="arc_protsome_B"/>
    <property type="match status" value="1"/>
</dbReference>
<dbReference type="PANTHER" id="PTHR32194:SF0">
    <property type="entry name" value="ATP-DEPENDENT PROTEASE SUBUNIT HSLV"/>
    <property type="match status" value="1"/>
</dbReference>
<dbReference type="PANTHER" id="PTHR32194">
    <property type="entry name" value="METALLOPROTEASE TLDD"/>
    <property type="match status" value="1"/>
</dbReference>
<dbReference type="Pfam" id="PF00227">
    <property type="entry name" value="Proteasome"/>
    <property type="match status" value="1"/>
</dbReference>
<dbReference type="PRINTS" id="PR00141">
    <property type="entry name" value="PROTEASOME"/>
</dbReference>
<dbReference type="SUPFAM" id="SSF56235">
    <property type="entry name" value="N-terminal nucleophile aminohydrolases (Ntn hydrolases)"/>
    <property type="match status" value="1"/>
</dbReference>
<dbReference type="PROSITE" id="PS51476">
    <property type="entry name" value="PROTEASOME_BETA_2"/>
    <property type="match status" value="1"/>
</dbReference>
<name>PSB2_THEKO</name>
<keyword id="KW-0068">Autocatalytic cleavage</keyword>
<keyword id="KW-0963">Cytoplasm</keyword>
<keyword id="KW-0378">Hydrolase</keyword>
<keyword id="KW-0645">Protease</keyword>
<keyword id="KW-0647">Proteasome</keyword>
<keyword id="KW-1185">Reference proteome</keyword>
<keyword id="KW-0888">Threonine protease</keyword>
<keyword id="KW-0865">Zymogen</keyword>